<sequence>MMMHSRNRSWTLTLLALGVVLATSAEDLPRSNRIAVPGEPLYYLMADAGPVVTPNEALKRTNRSLLKWWDDLFPRNNNNCCNNNNNNLLYPTAPLLPAPAVPNNCNGLQLQDLDPFKQMKLFKKLPELFPTASPCGQCGGGCGQNNYVAPAPQSPSYGGDGYGVLPNGGYIKPDTEYNGPGDGDAGYVAPAAPAYEAPAPPAPAYEAPAPPAPAYEAPAPAAPAYEAPAPAAPAYEAPTTDYSAPAPPAPAYEPPASSYTQGYSQPAQPSYVGAPPAQIVYQPIIYLSTPLASKSSTSQVEYDDQKYVTPTAPPPPPPPAPVYEAPSQNCYQPAAPPAPNYATPSCQTPIRLSLIDQPYRVAPELFEEYNYRLALASQNIL</sequence>
<keyword id="KW-1015">Disulfide bond</keyword>
<keyword id="KW-0272">Extracellular matrix</keyword>
<keyword id="KW-1185">Reference proteome</keyword>
<keyword id="KW-0677">Repeat</keyword>
<keyword id="KW-0964">Secreted</keyword>
<keyword id="KW-0732">Signal</keyword>
<proteinExistence type="evidence at protein level"/>
<dbReference type="EMBL" id="AE014134">
    <property type="protein sequence ID" value="AAF52311.2"/>
    <property type="molecule type" value="Genomic_DNA"/>
</dbReference>
<dbReference type="EMBL" id="AE014134">
    <property type="protein sequence ID" value="AGB92652.1"/>
    <property type="molecule type" value="Genomic_DNA"/>
</dbReference>
<dbReference type="RefSeq" id="NP_001260116.1">
    <property type="nucleotide sequence ID" value="NM_001273187.1"/>
</dbReference>
<dbReference type="RefSeq" id="NP_608974.2">
    <property type="nucleotide sequence ID" value="NM_135130.3"/>
</dbReference>
<dbReference type="FunCoup" id="Q9VMK3">
    <property type="interactions" value="32"/>
</dbReference>
<dbReference type="IntAct" id="Q9VMK3">
    <property type="interactions" value="1"/>
</dbReference>
<dbReference type="STRING" id="7227.FBpp0078868"/>
<dbReference type="GlyGen" id="Q9VMK3">
    <property type="glycosylation" value="3 sites"/>
</dbReference>
<dbReference type="PaxDb" id="7227-FBpp0078868"/>
<dbReference type="EnsemblMetazoa" id="FBtr0079238">
    <property type="protein sequence ID" value="FBpp0078868"/>
    <property type="gene ID" value="FBgn0086265"/>
</dbReference>
<dbReference type="EnsemblMetazoa" id="FBtr0333227">
    <property type="protein sequence ID" value="FBpp0305429"/>
    <property type="gene ID" value="FBgn0086265"/>
</dbReference>
<dbReference type="GeneID" id="33830"/>
<dbReference type="KEGG" id="dme:Dmel_CG9050"/>
<dbReference type="UCSC" id="CG9050-RA">
    <property type="organism name" value="d. melanogaster"/>
</dbReference>
<dbReference type="AGR" id="FB:FBgn0086265"/>
<dbReference type="CTD" id="5662"/>
<dbReference type="FlyBase" id="FBgn0086265">
    <property type="gene designation" value="psd"/>
</dbReference>
<dbReference type="VEuPathDB" id="VectorBase:FBgn0086265"/>
<dbReference type="eggNOG" id="ENOG502QPQC">
    <property type="taxonomic scope" value="Eukaryota"/>
</dbReference>
<dbReference type="HOGENOM" id="CLU_726215_0_0_1"/>
<dbReference type="InParanoid" id="Q9VMK3"/>
<dbReference type="OMA" id="PQTNCNG"/>
<dbReference type="OrthoDB" id="8070235at2759"/>
<dbReference type="BioGRID-ORCS" id="33830">
    <property type="hits" value="0 hits in 1 CRISPR screen"/>
</dbReference>
<dbReference type="ChiTaRS" id="CG5991">
    <property type="organism name" value="fly"/>
</dbReference>
<dbReference type="Proteomes" id="UP000000803">
    <property type="component" value="Chromosome 2L"/>
</dbReference>
<dbReference type="Bgee" id="FBgn0086265">
    <property type="expression patterns" value="Expressed in posterior terminal follicle cell in ovary and 17 other cell types or tissues"/>
</dbReference>
<dbReference type="ExpressionAtlas" id="Q9VMK3">
    <property type="expression patterns" value="baseline and differential"/>
</dbReference>
<dbReference type="GO" id="GO:0042600">
    <property type="term" value="C:egg chorion"/>
    <property type="evidence" value="ECO:0000314"/>
    <property type="project" value="FlyBase"/>
</dbReference>
<dbReference type="GO" id="GO:0005576">
    <property type="term" value="C:extracellular region"/>
    <property type="evidence" value="ECO:0007669"/>
    <property type="project" value="UniProtKB-SubCell"/>
</dbReference>
<dbReference type="GO" id="GO:0060388">
    <property type="term" value="C:vitelline envelope"/>
    <property type="evidence" value="ECO:0000314"/>
    <property type="project" value="FlyBase"/>
</dbReference>
<dbReference type="GO" id="GO:0032529">
    <property type="term" value="P:follicle cell microvillus organization"/>
    <property type="evidence" value="ECO:0000315"/>
    <property type="project" value="FlyBase"/>
</dbReference>
<dbReference type="GO" id="GO:0007305">
    <property type="term" value="P:vitelline membrane formation involved in chorion-containing eggshell formation"/>
    <property type="evidence" value="ECO:0000315"/>
    <property type="project" value="FlyBase"/>
</dbReference>
<evidence type="ECO:0000255" key="1"/>
<evidence type="ECO:0000256" key="2">
    <source>
        <dbReference type="SAM" id="MobiDB-lite"/>
    </source>
</evidence>
<evidence type="ECO:0000269" key="3">
    <source>
    </source>
</evidence>
<evidence type="ECO:0000269" key="4">
    <source>
    </source>
</evidence>
<evidence type="ECO:0000303" key="5">
    <source>
    </source>
</evidence>
<evidence type="ECO:0000305" key="6"/>
<evidence type="ECO:0000305" key="7">
    <source>
    </source>
</evidence>
<evidence type="ECO:0000305" key="8">
    <source>
    </source>
</evidence>
<evidence type="ECO:0000312" key="9">
    <source>
        <dbReference type="FlyBase" id="FBgn0086265"/>
    </source>
</evidence>
<evidence type="ECO:0000312" key="10">
    <source>
        <dbReference type="Proteomes" id="UP000000803"/>
    </source>
</evidence>
<name>VTU5_DROME</name>
<gene>
    <name evidence="5 9" type="primary">psd</name>
    <name evidence="9" type="synonym">TU-1</name>
    <name evidence="9" type="ORF">CG9050</name>
</gene>
<accession>Q9VMK3</accession>
<feature type="signal peptide" evidence="1">
    <location>
        <begin position="1"/>
        <end position="25"/>
    </location>
</feature>
<feature type="chain" id="PRO_5015100457" description="Protein palisade" evidence="1">
    <location>
        <begin position="26"/>
        <end position="381"/>
    </location>
</feature>
<feature type="repeat" description="1" evidence="7">
    <location>
        <begin position="190"/>
        <end position="199"/>
    </location>
</feature>
<feature type="repeat" description="2" evidence="7">
    <location>
        <begin position="200"/>
        <end position="209"/>
    </location>
</feature>
<feature type="repeat" description="3" evidence="7">
    <location>
        <begin position="210"/>
        <end position="219"/>
    </location>
</feature>
<feature type="repeat" description="4" evidence="7">
    <location>
        <begin position="220"/>
        <end position="229"/>
    </location>
</feature>
<feature type="repeat" description="5" evidence="7">
    <location>
        <begin position="230"/>
        <end position="239"/>
    </location>
</feature>
<feature type="repeat" description="6" evidence="7">
    <location>
        <begin position="247"/>
        <end position="256"/>
    </location>
</feature>
<feature type="region of interest" description="6 X 10 AA approximate tandem repeats of P-[AP]-A-P-A-Y-E-[AP]-P-[AT]" evidence="7">
    <location>
        <begin position="190"/>
        <end position="256"/>
    </location>
</feature>
<feature type="region of interest" description="Disordered" evidence="2">
    <location>
        <begin position="236"/>
        <end position="270"/>
    </location>
</feature>
<feature type="region of interest" description="Disordered" evidence="2">
    <location>
        <begin position="309"/>
        <end position="329"/>
    </location>
</feature>
<feature type="compositionally biased region" description="Pro residues" evidence="2">
    <location>
        <begin position="311"/>
        <end position="321"/>
    </location>
</feature>
<protein>
    <recommendedName>
        <fullName evidence="5 9">Protein palisade</fullName>
    </recommendedName>
</protein>
<reference evidence="10" key="1">
    <citation type="journal article" date="2000" name="Science">
        <title>The genome sequence of Drosophila melanogaster.</title>
        <authorList>
            <person name="Adams M.D."/>
            <person name="Celniker S.E."/>
            <person name="Holt R.A."/>
            <person name="Evans C.A."/>
            <person name="Gocayne J.D."/>
            <person name="Amanatides P.G."/>
            <person name="Scherer S.E."/>
            <person name="Li P.W."/>
            <person name="Hoskins R.A."/>
            <person name="Galle R.F."/>
            <person name="George R.A."/>
            <person name="Lewis S.E."/>
            <person name="Richards S."/>
            <person name="Ashburner M."/>
            <person name="Henderson S.N."/>
            <person name="Sutton G.G."/>
            <person name="Wortman J.R."/>
            <person name="Yandell M.D."/>
            <person name="Zhang Q."/>
            <person name="Chen L.X."/>
            <person name="Brandon R.C."/>
            <person name="Rogers Y.-H.C."/>
            <person name="Blazej R.G."/>
            <person name="Champe M."/>
            <person name="Pfeiffer B.D."/>
            <person name="Wan K.H."/>
            <person name="Doyle C."/>
            <person name="Baxter E.G."/>
            <person name="Helt G."/>
            <person name="Nelson C.R."/>
            <person name="Miklos G.L.G."/>
            <person name="Abril J.F."/>
            <person name="Agbayani A."/>
            <person name="An H.-J."/>
            <person name="Andrews-Pfannkoch C."/>
            <person name="Baldwin D."/>
            <person name="Ballew R.M."/>
            <person name="Basu A."/>
            <person name="Baxendale J."/>
            <person name="Bayraktaroglu L."/>
            <person name="Beasley E.M."/>
            <person name="Beeson K.Y."/>
            <person name="Benos P.V."/>
            <person name="Berman B.P."/>
            <person name="Bhandari D."/>
            <person name="Bolshakov S."/>
            <person name="Borkova D."/>
            <person name="Botchan M.R."/>
            <person name="Bouck J."/>
            <person name="Brokstein P."/>
            <person name="Brottier P."/>
            <person name="Burtis K.C."/>
            <person name="Busam D.A."/>
            <person name="Butler H."/>
            <person name="Cadieu E."/>
            <person name="Center A."/>
            <person name="Chandra I."/>
            <person name="Cherry J.M."/>
            <person name="Cawley S."/>
            <person name="Dahlke C."/>
            <person name="Davenport L.B."/>
            <person name="Davies P."/>
            <person name="de Pablos B."/>
            <person name="Delcher A."/>
            <person name="Deng Z."/>
            <person name="Mays A.D."/>
            <person name="Dew I."/>
            <person name="Dietz S.M."/>
            <person name="Dodson K."/>
            <person name="Doup L.E."/>
            <person name="Downes M."/>
            <person name="Dugan-Rocha S."/>
            <person name="Dunkov B.C."/>
            <person name="Dunn P."/>
            <person name="Durbin K.J."/>
            <person name="Evangelista C.C."/>
            <person name="Ferraz C."/>
            <person name="Ferriera S."/>
            <person name="Fleischmann W."/>
            <person name="Fosler C."/>
            <person name="Gabrielian A.E."/>
            <person name="Garg N.S."/>
            <person name="Gelbart W.M."/>
            <person name="Glasser K."/>
            <person name="Glodek A."/>
            <person name="Gong F."/>
            <person name="Gorrell J.H."/>
            <person name="Gu Z."/>
            <person name="Guan P."/>
            <person name="Harris M."/>
            <person name="Harris N.L."/>
            <person name="Harvey D.A."/>
            <person name="Heiman T.J."/>
            <person name="Hernandez J.R."/>
            <person name="Houck J."/>
            <person name="Hostin D."/>
            <person name="Houston K.A."/>
            <person name="Howland T.J."/>
            <person name="Wei M.-H."/>
            <person name="Ibegwam C."/>
            <person name="Jalali M."/>
            <person name="Kalush F."/>
            <person name="Karpen G.H."/>
            <person name="Ke Z."/>
            <person name="Kennison J.A."/>
            <person name="Ketchum K.A."/>
            <person name="Kimmel B.E."/>
            <person name="Kodira C.D."/>
            <person name="Kraft C.L."/>
            <person name="Kravitz S."/>
            <person name="Kulp D."/>
            <person name="Lai Z."/>
            <person name="Lasko P."/>
            <person name="Lei Y."/>
            <person name="Levitsky A.A."/>
            <person name="Li J.H."/>
            <person name="Li Z."/>
            <person name="Liang Y."/>
            <person name="Lin X."/>
            <person name="Liu X."/>
            <person name="Mattei B."/>
            <person name="McIntosh T.C."/>
            <person name="McLeod M.P."/>
            <person name="McPherson D."/>
            <person name="Merkulov G."/>
            <person name="Milshina N.V."/>
            <person name="Mobarry C."/>
            <person name="Morris J."/>
            <person name="Moshrefi A."/>
            <person name="Mount S.M."/>
            <person name="Moy M."/>
            <person name="Murphy B."/>
            <person name="Murphy L."/>
            <person name="Muzny D.M."/>
            <person name="Nelson D.L."/>
            <person name="Nelson D.R."/>
            <person name="Nelson K.A."/>
            <person name="Nixon K."/>
            <person name="Nusskern D.R."/>
            <person name="Pacleb J.M."/>
            <person name="Palazzolo M."/>
            <person name="Pittman G.S."/>
            <person name="Pan S."/>
            <person name="Pollard J."/>
            <person name="Puri V."/>
            <person name="Reese M.G."/>
            <person name="Reinert K."/>
            <person name="Remington K."/>
            <person name="Saunders R.D.C."/>
            <person name="Scheeler F."/>
            <person name="Shen H."/>
            <person name="Shue B.C."/>
            <person name="Siden-Kiamos I."/>
            <person name="Simpson M."/>
            <person name="Skupski M.P."/>
            <person name="Smith T.J."/>
            <person name="Spier E."/>
            <person name="Spradling A.C."/>
            <person name="Stapleton M."/>
            <person name="Strong R."/>
            <person name="Sun E."/>
            <person name="Svirskas R."/>
            <person name="Tector C."/>
            <person name="Turner R."/>
            <person name="Venter E."/>
            <person name="Wang A.H."/>
            <person name="Wang X."/>
            <person name="Wang Z.-Y."/>
            <person name="Wassarman D.A."/>
            <person name="Weinstock G.M."/>
            <person name="Weissenbach J."/>
            <person name="Williams S.M."/>
            <person name="Woodage T."/>
            <person name="Worley K.C."/>
            <person name="Wu D."/>
            <person name="Yang S."/>
            <person name="Yao Q.A."/>
            <person name="Ye J."/>
            <person name="Yeh R.-F."/>
            <person name="Zaveri J.S."/>
            <person name="Zhan M."/>
            <person name="Zhang G."/>
            <person name="Zhao Q."/>
            <person name="Zheng L."/>
            <person name="Zheng X.H."/>
            <person name="Zhong F.N."/>
            <person name="Zhong W."/>
            <person name="Zhou X."/>
            <person name="Zhu S.C."/>
            <person name="Zhu X."/>
            <person name="Smith H.O."/>
            <person name="Gibbs R.A."/>
            <person name="Myers E.W."/>
            <person name="Rubin G.M."/>
            <person name="Venter J.C."/>
        </authorList>
    </citation>
    <scope>NUCLEOTIDE SEQUENCE [LARGE SCALE GENOMIC DNA]</scope>
    <source>
        <strain evidence="10">Berkeley</strain>
    </source>
</reference>
<reference evidence="10" key="2">
    <citation type="journal article" date="2002" name="Genome Biol.">
        <title>Annotation of the Drosophila melanogaster euchromatic genome: a systematic review.</title>
        <authorList>
            <person name="Misra S."/>
            <person name="Crosby M.A."/>
            <person name="Mungall C.J."/>
            <person name="Matthews B.B."/>
            <person name="Campbell K.S."/>
            <person name="Hradecky P."/>
            <person name="Huang Y."/>
            <person name="Kaminker J.S."/>
            <person name="Millburn G.H."/>
            <person name="Prochnik S.E."/>
            <person name="Smith C.D."/>
            <person name="Tupy J.L."/>
            <person name="Whitfield E.J."/>
            <person name="Bayraktaroglu L."/>
            <person name="Berman B.P."/>
            <person name="Bettencourt B.R."/>
            <person name="Celniker S.E."/>
            <person name="de Grey A.D.N.J."/>
            <person name="Drysdale R.A."/>
            <person name="Harris N.L."/>
            <person name="Richter J."/>
            <person name="Russo S."/>
            <person name="Schroeder A.J."/>
            <person name="Shu S.Q."/>
            <person name="Stapleton M."/>
            <person name="Yamada C."/>
            <person name="Ashburner M."/>
            <person name="Gelbart W.M."/>
            <person name="Rubin G.M."/>
            <person name="Lewis S.E."/>
        </authorList>
    </citation>
    <scope>GENOME REANNOTATION</scope>
    <source>
        <strain evidence="10">Berkeley</strain>
    </source>
</reference>
<reference evidence="6" key="3">
    <citation type="journal article" date="2008" name="Dev. Biol.">
        <title>Palisade is required in the Drosophila ovary for assembly and function of the protective vitelline membrane.</title>
        <authorList>
            <person name="Elalayli M."/>
            <person name="Hall J.D."/>
            <person name="Fakhouri M."/>
            <person name="Neiswender H."/>
            <person name="Ellison T.T."/>
            <person name="Han Z."/>
            <person name="Roon P."/>
            <person name="LeMosy E.K."/>
        </authorList>
    </citation>
    <scope>FUNCTION</scope>
    <scope>SUBCELLULAR LOCATION</scope>
    <scope>TISSUE SPECIFICITY</scope>
    <scope>DEVELOPMENTAL STAGE</scope>
    <scope>CROSS-LINKING</scope>
    <scope>DISRUPTION PHENOTYPE</scope>
</reference>
<reference evidence="6" key="4">
    <citation type="journal article" date="2009" name="Curr. Biol.">
        <title>Sulfation of eggshell components by Pipe defines dorsal-ventral polarity in the Drosophila embryo.</title>
        <authorList>
            <person name="Zhang Z."/>
            <person name="Stevens L.M."/>
            <person name="Stein D."/>
        </authorList>
    </citation>
    <scope>SULFATION</scope>
</reference>
<comment type="function">
    <text evidence="3">Minor protein component of the vitelline membrane (PubMed:18514182). Involved in vitelline membrane biogenesis during late stages of oogenesis (PubMed:18514182). Required for efficient disulfide and non-disulfide cross-linking of several vitelline membrane components (PubMed:18514182).</text>
</comment>
<comment type="subcellular location">
    <subcellularLocation>
        <location evidence="3">Secreted</location>
    </subcellularLocation>
    <subcellularLocation>
        <location evidence="3">Secreted</location>
        <location evidence="3">Extracellular space</location>
        <location evidence="3">Extracellular matrix</location>
    </subcellularLocation>
    <text evidence="3">Secreted into the perivitelline space by follicle cells and becomes incorporated into the vitelline membrane.</text>
</comment>
<comment type="tissue specificity">
    <text evidence="3">Present in the perivitelline space of stage 10 egg chambers and in the vitelline membrane adjacent to the oocyte in stage 13 and 14 egg chambers (at protein level).</text>
</comment>
<comment type="developmental stage">
    <text evidence="3">Expressed in stage 10 egg chambers and persists throughout oogenesis (at protein level).</text>
</comment>
<comment type="PTM">
    <text evidence="4 8">Sulfated by pip; may be involved in embryo dorsal-ventral axis determination (PubMed:19540119). Sulfation by pip may occur on covalently bound glycosaminoglycans (Probable).</text>
</comment>
<comment type="PTM">
    <text evidence="3">May undergo both disulfide and non-disulfide cross-linking upon incorporation into the vitelline membrane.</text>
</comment>
<comment type="disruption phenotype">
    <text evidence="3">Females produce eggs with normal chorion morphology but that are fragile with increased chance of collapse after oviposition (PubMed:18514182). Embryos within these eggs fail to cellularize (PubMed:18514182). Follicle cell microvilli involved in vitelline membrane biogenesis are disorganized and vitelline membrane biogenesis is disrupted (PubMed:18514182).</text>
</comment>
<comment type="miscellaneous">
    <text evidence="5">The name 'palisade' was given because of the disruption of the palisade-like arrangement of vitelline bodies and follicle cell microvilli within the perivitelline space during vitelline membrane secretion.</text>
</comment>
<organism evidence="10">
    <name type="scientific">Drosophila melanogaster</name>
    <name type="common">Fruit fly</name>
    <dbReference type="NCBI Taxonomy" id="7227"/>
    <lineage>
        <taxon>Eukaryota</taxon>
        <taxon>Metazoa</taxon>
        <taxon>Ecdysozoa</taxon>
        <taxon>Arthropoda</taxon>
        <taxon>Hexapoda</taxon>
        <taxon>Insecta</taxon>
        <taxon>Pterygota</taxon>
        <taxon>Neoptera</taxon>
        <taxon>Endopterygota</taxon>
        <taxon>Diptera</taxon>
        <taxon>Brachycera</taxon>
        <taxon>Muscomorpha</taxon>
        <taxon>Ephydroidea</taxon>
        <taxon>Drosophilidae</taxon>
        <taxon>Drosophila</taxon>
        <taxon>Sophophora</taxon>
    </lineage>
</organism>